<feature type="chain" id="PRO_0000101442" description="Uncharacterized protein RC0052">
    <location>
        <begin position="1"/>
        <end position="65"/>
    </location>
</feature>
<name>Y052_RICCN</name>
<organism>
    <name type="scientific">Rickettsia conorii (strain ATCC VR-613 / Malish 7)</name>
    <dbReference type="NCBI Taxonomy" id="272944"/>
    <lineage>
        <taxon>Bacteria</taxon>
        <taxon>Pseudomonadati</taxon>
        <taxon>Pseudomonadota</taxon>
        <taxon>Alphaproteobacteria</taxon>
        <taxon>Rickettsiales</taxon>
        <taxon>Rickettsiaceae</taxon>
        <taxon>Rickettsieae</taxon>
        <taxon>Rickettsia</taxon>
        <taxon>spotted fever group</taxon>
    </lineage>
</organism>
<sequence>MLSRDSSQLTSFNNKDSHDIIEVSQTLNALISIIAKHDHDIARHAQAIADIKKCYNLQMLGILQI</sequence>
<protein>
    <recommendedName>
        <fullName>Uncharacterized protein RC0052</fullName>
    </recommendedName>
</protein>
<accession>Q92JL5</accession>
<gene>
    <name type="ordered locus">RC0052</name>
</gene>
<reference key="1">
    <citation type="journal article" date="2001" name="Science">
        <title>Mechanisms of evolution in Rickettsia conorii and R. prowazekii.</title>
        <authorList>
            <person name="Ogata H."/>
            <person name="Audic S."/>
            <person name="Renesto-Audiffren P."/>
            <person name="Fournier P.-E."/>
            <person name="Barbe V."/>
            <person name="Samson D."/>
            <person name="Roux V."/>
            <person name="Cossart P."/>
            <person name="Weissenbach J."/>
            <person name="Claverie J.-M."/>
            <person name="Raoult D."/>
        </authorList>
    </citation>
    <scope>NUCLEOTIDE SEQUENCE [LARGE SCALE GENOMIC DNA]</scope>
    <source>
        <strain>ATCC VR-613 / Malish 7</strain>
    </source>
</reference>
<proteinExistence type="predicted"/>
<dbReference type="EMBL" id="AE006914">
    <property type="protein sequence ID" value="AAL02590.1"/>
    <property type="molecule type" value="Genomic_DNA"/>
</dbReference>
<dbReference type="PIR" id="D97706">
    <property type="entry name" value="D97706"/>
</dbReference>
<dbReference type="RefSeq" id="WP_004996895.1">
    <property type="nucleotide sequence ID" value="NC_003103.1"/>
</dbReference>
<dbReference type="SMR" id="Q92JL5"/>
<dbReference type="KEGG" id="rco:RC0052"/>
<dbReference type="HOGENOM" id="CLU_2957772_0_0_5"/>
<dbReference type="Proteomes" id="UP000000816">
    <property type="component" value="Chromosome"/>
</dbReference>